<sequence length="226" mass="24489">MDPGKEGLPRKPRFSAQQLHVGKWLSPFFFTCAVYFLLWIPDDQPSWVGALVKCLPVLSLVVFLRAVDAGGGYSARLQGALLCSAVGDACLVWPEAFLHGVAAFAAAHLLYLWAFGLTPLQPGLLLLVILAALPYYGLLLWHLPPDLVLALTAYSLALATMLWRGLARGGSTGWGALLFTLSDTTLAWNAFAQPLPHARLVVMTTYYSAQVLISLSVSQSPKLKPN</sequence>
<proteinExistence type="inferred from homology"/>
<name>TM86B_PIG</name>
<keyword id="KW-0963">Cytoplasm</keyword>
<keyword id="KW-0256">Endoplasmic reticulum</keyword>
<keyword id="KW-0378">Hydrolase</keyword>
<keyword id="KW-0443">Lipid metabolism</keyword>
<keyword id="KW-0472">Membrane</keyword>
<keyword id="KW-1185">Reference proteome</keyword>
<keyword id="KW-0812">Transmembrane</keyword>
<keyword id="KW-1133">Transmembrane helix</keyword>
<organism>
    <name type="scientific">Sus scrofa</name>
    <name type="common">Pig</name>
    <dbReference type="NCBI Taxonomy" id="9823"/>
    <lineage>
        <taxon>Eukaryota</taxon>
        <taxon>Metazoa</taxon>
        <taxon>Chordata</taxon>
        <taxon>Craniata</taxon>
        <taxon>Vertebrata</taxon>
        <taxon>Euteleostomi</taxon>
        <taxon>Mammalia</taxon>
        <taxon>Eutheria</taxon>
        <taxon>Laurasiatheria</taxon>
        <taxon>Artiodactyla</taxon>
        <taxon>Suina</taxon>
        <taxon>Suidae</taxon>
        <taxon>Sus</taxon>
    </lineage>
</organism>
<protein>
    <recommendedName>
        <fullName>Lysoplasmalogenase TMEM86B</fullName>
        <ecNumber evidence="1">3.3.2.2</ecNumber>
    </recommendedName>
    <alternativeName>
        <fullName>Transmembrane protein 86B</fullName>
    </alternativeName>
</protein>
<comment type="function">
    <text evidence="1">Catalyzes the hydrolysis of the vinyl ether bond of choline or ethanolamine lysoplasmalogens, forming fatty aldehyde and glycerophosphocholine or glycerophosphoethanolamine, respectively and is specific for the sn-2-deacylated (lyso) form of plasmalogen.</text>
</comment>
<comment type="catalytic activity">
    <reaction evidence="1">
        <text>a 1-O-(1Z-alkenyl)-sn-glycero-3-phosphocholine + H2O = a 2,3-saturated aldehyde + sn-glycerol 3-phosphocholine</text>
        <dbReference type="Rhea" id="RHEA:22544"/>
        <dbReference type="ChEBI" id="CHEBI:15377"/>
        <dbReference type="ChEBI" id="CHEBI:16870"/>
        <dbReference type="ChEBI" id="CHEBI:73359"/>
        <dbReference type="ChEBI" id="CHEBI:77287"/>
        <dbReference type="EC" id="3.3.2.2"/>
    </reaction>
</comment>
<comment type="catalytic activity">
    <reaction evidence="1">
        <text>a 1-O-(1Z-alkenyl)-sn-glycero-3-phosphoethanolamine + H2O = a 2,3-saturated aldehyde + sn-glycero-3-phosphoethanolamine</text>
        <dbReference type="Rhea" id="RHEA:16905"/>
        <dbReference type="ChEBI" id="CHEBI:15377"/>
        <dbReference type="ChEBI" id="CHEBI:73359"/>
        <dbReference type="ChEBI" id="CHEBI:77288"/>
        <dbReference type="ChEBI" id="CHEBI:143890"/>
        <dbReference type="EC" id="3.3.2.2"/>
    </reaction>
</comment>
<comment type="activity regulation">
    <text evidence="1">Competitively inhibited by lysophosphatidic acid.</text>
</comment>
<comment type="subunit">
    <text evidence="1">Homodimer.</text>
</comment>
<comment type="subcellular location">
    <subcellularLocation>
        <location evidence="2">Endoplasmic reticulum membrane</location>
        <topology evidence="3">Multi-pass membrane protein</topology>
    </subcellularLocation>
    <subcellularLocation>
        <location evidence="1">Cytoplasm</location>
    </subcellularLocation>
</comment>
<comment type="similarity">
    <text evidence="4">Belongs to the TMEM86 family.</text>
</comment>
<gene>
    <name type="primary">TMEM86B</name>
</gene>
<evidence type="ECO:0000250" key="1">
    <source>
        <dbReference type="UniProtKB" id="Q8N661"/>
    </source>
</evidence>
<evidence type="ECO:0000250" key="2">
    <source>
        <dbReference type="UniProtKB" id="Q9D8N3"/>
    </source>
</evidence>
<evidence type="ECO:0000255" key="3"/>
<evidence type="ECO:0000305" key="4"/>
<reference key="1">
    <citation type="submission" date="2009-03" db="EMBL/GenBank/DDBJ databases">
        <authorList>
            <consortium name="Porcine genome sequencing project"/>
        </authorList>
    </citation>
    <scope>NUCLEOTIDE SEQUENCE [LARGE SCALE GENOMIC DNA]</scope>
</reference>
<feature type="chain" id="PRO_0000410970" description="Lysoplasmalogenase TMEM86B">
    <location>
        <begin position="1"/>
        <end position="226"/>
    </location>
</feature>
<feature type="topological domain" description="Cytoplasmic" evidence="4">
    <location>
        <begin position="1"/>
        <end position="23"/>
    </location>
</feature>
<feature type="transmembrane region" description="Helical" evidence="3">
    <location>
        <begin position="24"/>
        <end position="40"/>
    </location>
</feature>
<feature type="topological domain" description="Extracellular" evidence="4">
    <location>
        <begin position="41"/>
        <end position="46"/>
    </location>
</feature>
<feature type="transmembrane region" description="Helical" evidence="3">
    <location>
        <begin position="47"/>
        <end position="64"/>
    </location>
</feature>
<feature type="topological domain" description="Cytoplasmic" evidence="4">
    <location>
        <begin position="65"/>
        <end position="76"/>
    </location>
</feature>
<feature type="transmembrane region" description="Helical" evidence="3">
    <location>
        <begin position="77"/>
        <end position="93"/>
    </location>
</feature>
<feature type="topological domain" description="Extracellular" evidence="4">
    <location>
        <begin position="94"/>
        <end position="99"/>
    </location>
</feature>
<feature type="transmembrane region" description="Helical" evidence="3">
    <location>
        <begin position="100"/>
        <end position="117"/>
    </location>
</feature>
<feature type="topological domain" description="Cytoplasmic" evidence="4">
    <location>
        <begin position="118"/>
        <end position="123"/>
    </location>
</feature>
<feature type="transmembrane region" description="Helical" evidence="3">
    <location>
        <begin position="124"/>
        <end position="140"/>
    </location>
</feature>
<feature type="topological domain" description="Extracellular" evidence="4">
    <location>
        <begin position="141"/>
        <end position="146"/>
    </location>
</feature>
<feature type="transmembrane region" description="Helical" evidence="3">
    <location>
        <begin position="147"/>
        <end position="163"/>
    </location>
</feature>
<feature type="topological domain" description="Cytoplasmic" evidence="4">
    <location>
        <begin position="164"/>
        <end position="171"/>
    </location>
</feature>
<feature type="transmembrane region" description="Helical" evidence="3">
    <location>
        <begin position="172"/>
        <end position="188"/>
    </location>
</feature>
<feature type="topological domain" description="Extracellular" evidence="4">
    <location>
        <begin position="189"/>
        <end position="199"/>
    </location>
</feature>
<feature type="transmembrane region" description="Helical" evidence="3">
    <location>
        <begin position="200"/>
        <end position="217"/>
    </location>
</feature>
<feature type="topological domain" description="Cytoplasmic" evidence="4">
    <location>
        <begin position="218"/>
        <end position="226"/>
    </location>
</feature>
<dbReference type="EC" id="3.3.2.2" evidence="1"/>
<dbReference type="EMBL" id="FP245423">
    <property type="status" value="NOT_ANNOTATED_CDS"/>
    <property type="molecule type" value="Genomic_DNA"/>
</dbReference>
<dbReference type="RefSeq" id="NP_001230205.1">
    <property type="nucleotide sequence ID" value="NM_001243276.1"/>
</dbReference>
<dbReference type="RefSeq" id="XP_013844157.1">
    <property type="nucleotide sequence ID" value="XM_013988703.1"/>
</dbReference>
<dbReference type="RefSeq" id="XP_020948985.1">
    <property type="nucleotide sequence ID" value="XM_021093326.1"/>
</dbReference>
<dbReference type="FunCoup" id="F1RMN2">
    <property type="interactions" value="195"/>
</dbReference>
<dbReference type="STRING" id="9823.ENSSSCP00000060713"/>
<dbReference type="PaxDb" id="9823-ENSSSCP00000003581"/>
<dbReference type="Ensembl" id="ENSSSCT00000003666.4">
    <property type="protein sequence ID" value="ENSSSCP00000003581.2"/>
    <property type="gene ID" value="ENSSSCG00000003302.5"/>
</dbReference>
<dbReference type="GeneID" id="100514582"/>
<dbReference type="KEGG" id="ssc:100514582"/>
<dbReference type="CTD" id="255043"/>
<dbReference type="VGNC" id="VGNC:94211">
    <property type="gene designation" value="TMEM86B"/>
</dbReference>
<dbReference type="eggNOG" id="KOG4804">
    <property type="taxonomic scope" value="Eukaryota"/>
</dbReference>
<dbReference type="GeneTree" id="ENSGT00390000007101"/>
<dbReference type="HOGENOM" id="CLU_079086_1_0_1"/>
<dbReference type="InParanoid" id="F1RMN2"/>
<dbReference type="OMA" id="ACLIWPA"/>
<dbReference type="OrthoDB" id="2133758at2759"/>
<dbReference type="TreeFam" id="TF324663"/>
<dbReference type="Reactome" id="R-SSC-1482788">
    <property type="pathway name" value="Acyl chain remodelling of PC"/>
</dbReference>
<dbReference type="Proteomes" id="UP000008227">
    <property type="component" value="Chromosome 6"/>
</dbReference>
<dbReference type="Proteomes" id="UP000314985">
    <property type="component" value="Unplaced"/>
</dbReference>
<dbReference type="Proteomes" id="UP000694570">
    <property type="component" value="Unplaced"/>
</dbReference>
<dbReference type="Proteomes" id="UP000694571">
    <property type="component" value="Unplaced"/>
</dbReference>
<dbReference type="Proteomes" id="UP000694720">
    <property type="component" value="Unplaced"/>
</dbReference>
<dbReference type="Proteomes" id="UP000694722">
    <property type="component" value="Unplaced"/>
</dbReference>
<dbReference type="Proteomes" id="UP000694723">
    <property type="component" value="Unplaced"/>
</dbReference>
<dbReference type="Proteomes" id="UP000694724">
    <property type="component" value="Unplaced"/>
</dbReference>
<dbReference type="Proteomes" id="UP000694725">
    <property type="component" value="Unplaced"/>
</dbReference>
<dbReference type="Proteomes" id="UP000694726">
    <property type="component" value="Unplaced"/>
</dbReference>
<dbReference type="Proteomes" id="UP000694727">
    <property type="component" value="Unplaced"/>
</dbReference>
<dbReference type="Proteomes" id="UP000694728">
    <property type="component" value="Unplaced"/>
</dbReference>
<dbReference type="Bgee" id="ENSSSCG00000003302">
    <property type="expression patterns" value="Expressed in liver and 22 other cell types or tissues"/>
</dbReference>
<dbReference type="ExpressionAtlas" id="F1RMN2">
    <property type="expression patterns" value="baseline"/>
</dbReference>
<dbReference type="GO" id="GO:0005737">
    <property type="term" value="C:cytoplasm"/>
    <property type="evidence" value="ECO:0000250"/>
    <property type="project" value="UniProtKB"/>
</dbReference>
<dbReference type="GO" id="GO:0005789">
    <property type="term" value="C:endoplasmic reticulum membrane"/>
    <property type="evidence" value="ECO:0000250"/>
    <property type="project" value="UniProtKB"/>
</dbReference>
<dbReference type="GO" id="GO:0016020">
    <property type="term" value="C:membrane"/>
    <property type="evidence" value="ECO:0000250"/>
    <property type="project" value="UniProtKB"/>
</dbReference>
<dbReference type="GO" id="GO:0047408">
    <property type="term" value="F:alkenylglycerophosphocholine hydrolase activity"/>
    <property type="evidence" value="ECO:0000250"/>
    <property type="project" value="UniProtKB"/>
</dbReference>
<dbReference type="GO" id="GO:0047826">
    <property type="term" value="F:D-lysine 5,6-aminomutase activity"/>
    <property type="evidence" value="ECO:0000250"/>
    <property type="project" value="UniProtKB"/>
</dbReference>
<dbReference type="GO" id="GO:0046485">
    <property type="term" value="P:ether lipid metabolic process"/>
    <property type="evidence" value="ECO:0000250"/>
    <property type="project" value="UniProtKB"/>
</dbReference>
<dbReference type="InterPro" id="IPR012506">
    <property type="entry name" value="TMEM86B-like"/>
</dbReference>
<dbReference type="PANTHER" id="PTHR31885">
    <property type="entry name" value="GH04784P"/>
    <property type="match status" value="1"/>
</dbReference>
<dbReference type="PANTHER" id="PTHR31885:SF7">
    <property type="entry name" value="LYSOPLASMALOGENASE"/>
    <property type="match status" value="1"/>
</dbReference>
<dbReference type="Pfam" id="PF07947">
    <property type="entry name" value="YhhN"/>
    <property type="match status" value="1"/>
</dbReference>
<accession>F1RMN2</accession>